<name>RL19A_YEAST</name>
<feature type="initiator methionine" description="Removed" evidence="5 7">
    <location>
        <position position="1"/>
    </location>
</feature>
<feature type="chain" id="PRO_0000131184" description="Large ribosomal subunit protein eL19A">
    <location>
        <begin position="2"/>
        <end position="189"/>
    </location>
</feature>
<feature type="region of interest" description="Disordered" evidence="1">
    <location>
        <begin position="58"/>
        <end position="85"/>
    </location>
</feature>
<feature type="region of interest" description="Disordered" evidence="1">
    <location>
        <begin position="164"/>
        <end position="189"/>
    </location>
</feature>
<feature type="compositionally biased region" description="Basic residues" evidence="1">
    <location>
        <begin position="59"/>
        <end position="68"/>
    </location>
</feature>
<feature type="modified residue" description="Phosphoserine" evidence="13">
    <location>
        <position position="30"/>
    </location>
</feature>
<feature type="modified residue" description="Phosphoserine" evidence="13">
    <location>
        <position position="37"/>
    </location>
</feature>
<feature type="modified residue" description="Phosphoserine" evidence="13">
    <location>
        <position position="91"/>
    </location>
</feature>
<feature type="cross-link" description="Glycyl lysine isopeptide (Lys-Gly) (interchain with G-Cter in ubiquitin)" evidence="14">
    <location>
        <position position="21"/>
    </location>
</feature>
<feature type="cross-link" description="Glycyl lysine isopeptide (Lys-Gly) (interchain with G-Cter in ubiquitin)" evidence="14">
    <location>
        <position position="53"/>
    </location>
</feature>
<feature type="cross-link" description="Glycyl lysine isopeptide (Lys-Gly) (interchain with G-Cter in ubiquitin)" evidence="14">
    <location>
        <position position="60"/>
    </location>
</feature>
<feature type="cross-link" description="Glycyl lysine isopeptide (Lys-Gly) (interchain with G-Cter in ubiquitin)" evidence="14">
    <location>
        <position position="146"/>
    </location>
</feature>
<feature type="cross-link" description="Glycyl lysine isopeptide (Lys-Gly) (interchain with G-Cter in ubiquitin)" evidence="14">
    <location>
        <position position="186"/>
    </location>
</feature>
<feature type="sequence conflict" description="In Ref. 7; J03724." evidence="10" ref="7">
    <original>A</original>
    <variation>S</variation>
    <location>
        <position position="54"/>
    </location>
</feature>
<feature type="helix" evidence="15">
    <location>
        <begin position="5"/>
        <end position="15"/>
    </location>
</feature>
<feature type="strand" evidence="15">
    <location>
        <begin position="21"/>
        <end position="24"/>
    </location>
</feature>
<feature type="helix" evidence="15">
    <location>
        <begin position="29"/>
        <end position="33"/>
    </location>
</feature>
<feature type="helix" evidence="15">
    <location>
        <begin position="38"/>
        <end position="46"/>
    </location>
</feature>
<feature type="strand" evidence="15">
    <location>
        <begin position="49"/>
        <end position="52"/>
    </location>
</feature>
<feature type="helix" evidence="15">
    <location>
        <begin position="91"/>
        <end position="111"/>
    </location>
</feature>
<feature type="helix" evidence="15">
    <location>
        <begin position="117"/>
        <end position="128"/>
    </location>
</feature>
<feature type="helix" evidence="15">
    <location>
        <begin position="135"/>
        <end position="161"/>
    </location>
</feature>
<organism>
    <name type="scientific">Saccharomyces cerevisiae (strain ATCC 204508 / S288c)</name>
    <name type="common">Baker's yeast</name>
    <dbReference type="NCBI Taxonomy" id="559292"/>
    <lineage>
        <taxon>Eukaryota</taxon>
        <taxon>Fungi</taxon>
        <taxon>Dikarya</taxon>
        <taxon>Ascomycota</taxon>
        <taxon>Saccharomycotina</taxon>
        <taxon>Saccharomycetes</taxon>
        <taxon>Saccharomycetales</taxon>
        <taxon>Saccharomycetaceae</taxon>
        <taxon>Saccharomyces</taxon>
    </lineage>
</organism>
<dbReference type="EMBL" id="Z36751">
    <property type="protein sequence ID" value="CAA85322.1"/>
    <property type="molecule type" value="Genomic_DNA"/>
</dbReference>
<dbReference type="EMBL" id="D17337">
    <property type="protein sequence ID" value="BAA04155.1"/>
    <property type="molecule type" value="mRNA"/>
</dbReference>
<dbReference type="EMBL" id="Z35953">
    <property type="protein sequence ID" value="CAA85030.1"/>
    <property type="molecule type" value="Genomic_DNA"/>
</dbReference>
<dbReference type="EMBL" id="Z35954">
    <property type="protein sequence ID" value="CAA85032.1"/>
    <property type="molecule type" value="Genomic_DNA"/>
</dbReference>
<dbReference type="EMBL" id="J03724">
    <property type="status" value="NOT_ANNOTATED_CDS"/>
    <property type="molecule type" value="Genomic_DNA"/>
</dbReference>
<dbReference type="EMBL" id="BK006936">
    <property type="protein sequence ID" value="DAA07204.1"/>
    <property type="molecule type" value="Genomic_DNA"/>
</dbReference>
<dbReference type="PIR" id="S44597">
    <property type="entry name" value="S44597"/>
</dbReference>
<dbReference type="RefSeq" id="NP_009641.1">
    <property type="nucleotide sequence ID" value="NM_001180057.1"/>
</dbReference>
<dbReference type="PDB" id="2WW9">
    <property type="method" value="EM"/>
    <property type="resolution" value="8.60 A"/>
    <property type="chains" value="J=1-189"/>
</dbReference>
<dbReference type="PDB" id="2WWA">
    <property type="method" value="EM"/>
    <property type="resolution" value="8.90 A"/>
    <property type="chains" value="J=1-189"/>
</dbReference>
<dbReference type="PDB" id="3J6X">
    <property type="method" value="EM"/>
    <property type="resolution" value="6.10 A"/>
    <property type="chains" value="59=1-189"/>
</dbReference>
<dbReference type="PDB" id="3J6Y">
    <property type="method" value="EM"/>
    <property type="resolution" value="6.10 A"/>
    <property type="chains" value="59=1-189"/>
</dbReference>
<dbReference type="PDB" id="3J77">
    <property type="method" value="EM"/>
    <property type="resolution" value="6.20 A"/>
    <property type="chains" value="69=1-189"/>
</dbReference>
<dbReference type="PDB" id="3J78">
    <property type="method" value="EM"/>
    <property type="resolution" value="6.30 A"/>
    <property type="chains" value="69=1-189"/>
</dbReference>
<dbReference type="PDB" id="3JCT">
    <property type="method" value="EM"/>
    <property type="resolution" value="3.08 A"/>
    <property type="chains" value="R=1-189"/>
</dbReference>
<dbReference type="PDB" id="4U3M">
    <property type="method" value="X-ray"/>
    <property type="resolution" value="3.00 A"/>
    <property type="chains" value="M9/m9=2-189"/>
</dbReference>
<dbReference type="PDB" id="4U3N">
    <property type="method" value="X-ray"/>
    <property type="resolution" value="3.20 A"/>
    <property type="chains" value="M9/m9=2-189"/>
</dbReference>
<dbReference type="PDB" id="4U3U">
    <property type="method" value="X-ray"/>
    <property type="resolution" value="2.90 A"/>
    <property type="chains" value="M9/m9=2-189"/>
</dbReference>
<dbReference type="PDB" id="4U4N">
    <property type="method" value="X-ray"/>
    <property type="resolution" value="3.10 A"/>
    <property type="chains" value="M9/m9=2-189"/>
</dbReference>
<dbReference type="PDB" id="4U4O">
    <property type="method" value="X-ray"/>
    <property type="resolution" value="3.60 A"/>
    <property type="chains" value="M9/m9=2-189"/>
</dbReference>
<dbReference type="PDB" id="4U4Q">
    <property type="method" value="X-ray"/>
    <property type="resolution" value="3.00 A"/>
    <property type="chains" value="M9/m9=2-189"/>
</dbReference>
<dbReference type="PDB" id="4U4R">
    <property type="method" value="X-ray"/>
    <property type="resolution" value="2.80 A"/>
    <property type="chains" value="M9/m9=2-189"/>
</dbReference>
<dbReference type="PDB" id="4U4U">
    <property type="method" value="X-ray"/>
    <property type="resolution" value="3.00 A"/>
    <property type="chains" value="M9/m9=2-189"/>
</dbReference>
<dbReference type="PDB" id="4U4Y">
    <property type="method" value="X-ray"/>
    <property type="resolution" value="3.20 A"/>
    <property type="chains" value="M9/m9=2-189"/>
</dbReference>
<dbReference type="PDB" id="4U4Z">
    <property type="method" value="X-ray"/>
    <property type="resolution" value="3.10 A"/>
    <property type="chains" value="M9/m9=2-189"/>
</dbReference>
<dbReference type="PDB" id="4U50">
    <property type="method" value="X-ray"/>
    <property type="resolution" value="3.20 A"/>
    <property type="chains" value="M9/m9=2-189"/>
</dbReference>
<dbReference type="PDB" id="4U51">
    <property type="method" value="X-ray"/>
    <property type="resolution" value="3.20 A"/>
    <property type="chains" value="M9/m9=2-189"/>
</dbReference>
<dbReference type="PDB" id="4U52">
    <property type="method" value="X-ray"/>
    <property type="resolution" value="3.00 A"/>
    <property type="chains" value="M9/m9=2-189"/>
</dbReference>
<dbReference type="PDB" id="4U53">
    <property type="method" value="X-ray"/>
    <property type="resolution" value="3.30 A"/>
    <property type="chains" value="M9/m9=2-189"/>
</dbReference>
<dbReference type="PDB" id="4U55">
    <property type="method" value="X-ray"/>
    <property type="resolution" value="3.20 A"/>
    <property type="chains" value="M9/m9=2-189"/>
</dbReference>
<dbReference type="PDB" id="4U56">
    <property type="method" value="X-ray"/>
    <property type="resolution" value="3.45 A"/>
    <property type="chains" value="M9/m9=2-189"/>
</dbReference>
<dbReference type="PDB" id="4U6F">
    <property type="method" value="X-ray"/>
    <property type="resolution" value="3.10 A"/>
    <property type="chains" value="M9/m9=2-189"/>
</dbReference>
<dbReference type="PDB" id="4V4B">
    <property type="method" value="EM"/>
    <property type="resolution" value="11.70 A"/>
    <property type="chains" value="BP=2-143"/>
</dbReference>
<dbReference type="PDB" id="4V6I">
    <property type="method" value="EM"/>
    <property type="resolution" value="8.80 A"/>
    <property type="chains" value="BT=1-189"/>
</dbReference>
<dbReference type="PDB" id="4V7F">
    <property type="method" value="EM"/>
    <property type="resolution" value="8.70 A"/>
    <property type="chains" value="R=1-189"/>
</dbReference>
<dbReference type="PDB" id="4V7R">
    <property type="method" value="X-ray"/>
    <property type="resolution" value="4.00 A"/>
    <property type="chains" value="BS/DS=1-189"/>
</dbReference>
<dbReference type="PDB" id="4V88">
    <property type="method" value="X-ray"/>
    <property type="resolution" value="3.00 A"/>
    <property type="chains" value="BR/DR=1-189"/>
</dbReference>
<dbReference type="PDB" id="4V91">
    <property type="method" value="EM"/>
    <property type="resolution" value="3.70 A"/>
    <property type="chains" value="R=1-189"/>
</dbReference>
<dbReference type="PDB" id="5APN">
    <property type="method" value="EM"/>
    <property type="resolution" value="3.91 A"/>
    <property type="chains" value="R=1-189"/>
</dbReference>
<dbReference type="PDB" id="5APO">
    <property type="method" value="EM"/>
    <property type="resolution" value="3.41 A"/>
    <property type="chains" value="R=1-189"/>
</dbReference>
<dbReference type="PDB" id="5DAT">
    <property type="method" value="X-ray"/>
    <property type="resolution" value="3.15 A"/>
    <property type="chains" value="M9/m9=2-189"/>
</dbReference>
<dbReference type="PDB" id="5DC3">
    <property type="method" value="X-ray"/>
    <property type="resolution" value="3.25 A"/>
    <property type="chains" value="M9/m9=2-189"/>
</dbReference>
<dbReference type="PDB" id="5DGE">
    <property type="method" value="X-ray"/>
    <property type="resolution" value="3.45 A"/>
    <property type="chains" value="M9/m9=2-189"/>
</dbReference>
<dbReference type="PDB" id="5DGF">
    <property type="method" value="X-ray"/>
    <property type="resolution" value="3.30 A"/>
    <property type="chains" value="M9/m9=2-189"/>
</dbReference>
<dbReference type="PDB" id="5DGV">
    <property type="method" value="X-ray"/>
    <property type="resolution" value="3.10 A"/>
    <property type="chains" value="M9/m9=2-189"/>
</dbReference>
<dbReference type="PDB" id="5FCI">
    <property type="method" value="X-ray"/>
    <property type="resolution" value="3.40 A"/>
    <property type="chains" value="M9/m9=2-189"/>
</dbReference>
<dbReference type="PDB" id="5FCJ">
    <property type="method" value="X-ray"/>
    <property type="resolution" value="3.10 A"/>
    <property type="chains" value="M9/m9=2-189"/>
</dbReference>
<dbReference type="PDB" id="5GAK">
    <property type="method" value="EM"/>
    <property type="resolution" value="3.88 A"/>
    <property type="chains" value="T=1-189"/>
</dbReference>
<dbReference type="PDB" id="5H4P">
    <property type="method" value="EM"/>
    <property type="resolution" value="3.07 A"/>
    <property type="chains" value="R=1-189"/>
</dbReference>
<dbReference type="PDB" id="5I4L">
    <property type="method" value="X-ray"/>
    <property type="resolution" value="3.10 A"/>
    <property type="chains" value="M9/m9=2-189"/>
</dbReference>
<dbReference type="PDB" id="5JCS">
    <property type="method" value="EM"/>
    <property type="resolution" value="9.50 A"/>
    <property type="chains" value="R=1-189"/>
</dbReference>
<dbReference type="PDB" id="5JUO">
    <property type="method" value="EM"/>
    <property type="resolution" value="4.00 A"/>
    <property type="chains" value="W=1-189"/>
</dbReference>
<dbReference type="PDB" id="5JUP">
    <property type="method" value="EM"/>
    <property type="resolution" value="3.50 A"/>
    <property type="chains" value="W=1-189"/>
</dbReference>
<dbReference type="PDB" id="5JUS">
    <property type="method" value="EM"/>
    <property type="resolution" value="4.20 A"/>
    <property type="chains" value="W=1-189"/>
</dbReference>
<dbReference type="PDB" id="5JUT">
    <property type="method" value="EM"/>
    <property type="resolution" value="4.00 A"/>
    <property type="chains" value="W=1-189"/>
</dbReference>
<dbReference type="PDB" id="5JUU">
    <property type="method" value="EM"/>
    <property type="resolution" value="4.00 A"/>
    <property type="chains" value="W=1-189"/>
</dbReference>
<dbReference type="PDB" id="5LYB">
    <property type="method" value="X-ray"/>
    <property type="resolution" value="3.25 A"/>
    <property type="chains" value="M9/m9=2-189"/>
</dbReference>
<dbReference type="PDB" id="5M1J">
    <property type="method" value="EM"/>
    <property type="resolution" value="3.30 A"/>
    <property type="chains" value="R5=2-189"/>
</dbReference>
<dbReference type="PDB" id="5MC6">
    <property type="method" value="EM"/>
    <property type="resolution" value="3.80 A"/>
    <property type="chains" value="BF=1-189"/>
</dbReference>
<dbReference type="PDB" id="5MEI">
    <property type="method" value="X-ray"/>
    <property type="resolution" value="3.50 A"/>
    <property type="chains" value="CT/z=2-189"/>
</dbReference>
<dbReference type="PDB" id="5NDG">
    <property type="method" value="X-ray"/>
    <property type="resolution" value="3.70 A"/>
    <property type="chains" value="M9/m9=2-189"/>
</dbReference>
<dbReference type="PDB" id="5NDV">
    <property type="method" value="X-ray"/>
    <property type="resolution" value="3.30 A"/>
    <property type="chains" value="M9/m9=2-189"/>
</dbReference>
<dbReference type="PDB" id="5NDW">
    <property type="method" value="X-ray"/>
    <property type="resolution" value="3.70 A"/>
    <property type="chains" value="M9/m9=2-189"/>
</dbReference>
<dbReference type="PDB" id="5OBM">
    <property type="method" value="X-ray"/>
    <property type="resolution" value="3.40 A"/>
    <property type="chains" value="M9/m9=2-189"/>
</dbReference>
<dbReference type="PDB" id="5ON6">
    <property type="method" value="X-ray"/>
    <property type="resolution" value="3.10 A"/>
    <property type="chains" value="CT/z=2-189"/>
</dbReference>
<dbReference type="PDB" id="5T62">
    <property type="method" value="EM"/>
    <property type="resolution" value="3.30 A"/>
    <property type="chains" value="e=1-189"/>
</dbReference>
<dbReference type="PDB" id="5T6R">
    <property type="method" value="EM"/>
    <property type="resolution" value="4.50 A"/>
    <property type="chains" value="e=1-189"/>
</dbReference>
<dbReference type="PDB" id="5TBW">
    <property type="method" value="X-ray"/>
    <property type="resolution" value="3.00 A"/>
    <property type="chains" value="CT/z=2-189"/>
</dbReference>
<dbReference type="PDB" id="5TGA">
    <property type="method" value="X-ray"/>
    <property type="resolution" value="3.30 A"/>
    <property type="chains" value="M9/m9=2-189"/>
</dbReference>
<dbReference type="PDB" id="5TGM">
    <property type="method" value="X-ray"/>
    <property type="resolution" value="3.50 A"/>
    <property type="chains" value="M9/m9=2-189"/>
</dbReference>
<dbReference type="PDB" id="6ELZ">
    <property type="method" value="EM"/>
    <property type="resolution" value="3.30 A"/>
    <property type="chains" value="R=1-189"/>
</dbReference>
<dbReference type="PDB" id="6EM5">
    <property type="method" value="EM"/>
    <property type="resolution" value="4.30 A"/>
    <property type="chains" value="R=1-189"/>
</dbReference>
<dbReference type="PDB" id="6FT6">
    <property type="method" value="EM"/>
    <property type="resolution" value="3.90 A"/>
    <property type="chains" value="R=1-189"/>
</dbReference>
<dbReference type="PDB" id="6GQ1">
    <property type="method" value="EM"/>
    <property type="resolution" value="4.40 A"/>
    <property type="chains" value="R=2-189"/>
</dbReference>
<dbReference type="PDB" id="6GQB">
    <property type="method" value="EM"/>
    <property type="resolution" value="3.90 A"/>
    <property type="chains" value="R=2-189"/>
</dbReference>
<dbReference type="PDB" id="6GQV">
    <property type="method" value="EM"/>
    <property type="resolution" value="4.00 A"/>
    <property type="chains" value="R=2-189"/>
</dbReference>
<dbReference type="PDB" id="6HD7">
    <property type="method" value="EM"/>
    <property type="resolution" value="3.40 A"/>
    <property type="chains" value="T=1-189"/>
</dbReference>
<dbReference type="PDB" id="6HHQ">
    <property type="method" value="X-ray"/>
    <property type="resolution" value="3.10 A"/>
    <property type="chains" value="CT/z=1-189"/>
</dbReference>
<dbReference type="PDB" id="6I7O">
    <property type="method" value="EM"/>
    <property type="resolution" value="5.30 A"/>
    <property type="chains" value="BF/YF=2-189"/>
</dbReference>
<dbReference type="PDB" id="6M62">
    <property type="method" value="EM"/>
    <property type="resolution" value="3.20 A"/>
    <property type="chains" value="R=1-189"/>
</dbReference>
<dbReference type="PDB" id="6N8J">
    <property type="method" value="EM"/>
    <property type="resolution" value="3.50 A"/>
    <property type="chains" value="R=1-189"/>
</dbReference>
<dbReference type="PDB" id="6N8K">
    <property type="method" value="EM"/>
    <property type="resolution" value="3.60 A"/>
    <property type="chains" value="R=1-189"/>
</dbReference>
<dbReference type="PDB" id="6N8L">
    <property type="method" value="EM"/>
    <property type="resolution" value="3.60 A"/>
    <property type="chains" value="R=1-189"/>
</dbReference>
<dbReference type="PDB" id="6N8M">
    <property type="method" value="EM"/>
    <property type="resolution" value="3.50 A"/>
    <property type="chains" value="e=1-189"/>
</dbReference>
<dbReference type="PDB" id="6N8N">
    <property type="method" value="EM"/>
    <property type="resolution" value="3.80 A"/>
    <property type="chains" value="e=1-189"/>
</dbReference>
<dbReference type="PDB" id="6N8O">
    <property type="method" value="EM"/>
    <property type="resolution" value="3.50 A"/>
    <property type="chains" value="e=1-189"/>
</dbReference>
<dbReference type="PDB" id="6OIG">
    <property type="method" value="EM"/>
    <property type="resolution" value="3.80 A"/>
    <property type="chains" value="R=2-189"/>
</dbReference>
<dbReference type="PDB" id="6Q8Y">
    <property type="method" value="EM"/>
    <property type="resolution" value="3.10 A"/>
    <property type="chains" value="BF=2-189"/>
</dbReference>
<dbReference type="PDB" id="6QIK">
    <property type="method" value="EM"/>
    <property type="resolution" value="3.10 A"/>
    <property type="chains" value="R=1-189"/>
</dbReference>
<dbReference type="PDB" id="6QT0">
    <property type="method" value="EM"/>
    <property type="resolution" value="3.40 A"/>
    <property type="chains" value="R=1-189"/>
</dbReference>
<dbReference type="PDB" id="6QTZ">
    <property type="method" value="EM"/>
    <property type="resolution" value="3.50 A"/>
    <property type="chains" value="R=1-189"/>
</dbReference>
<dbReference type="PDB" id="6R84">
    <property type="method" value="EM"/>
    <property type="resolution" value="3.60 A"/>
    <property type="chains" value="T=2-153"/>
</dbReference>
<dbReference type="PDB" id="6R86">
    <property type="method" value="EM"/>
    <property type="resolution" value="3.40 A"/>
    <property type="chains" value="T=2-153"/>
</dbReference>
<dbReference type="PDB" id="6R87">
    <property type="method" value="EM"/>
    <property type="resolution" value="3.40 A"/>
    <property type="chains" value="T=2-153"/>
</dbReference>
<dbReference type="PDB" id="6RI5">
    <property type="method" value="EM"/>
    <property type="resolution" value="3.30 A"/>
    <property type="chains" value="R=1-189"/>
</dbReference>
<dbReference type="PDB" id="6RZZ">
    <property type="method" value="EM"/>
    <property type="resolution" value="3.20 A"/>
    <property type="chains" value="R=1-189"/>
</dbReference>
<dbReference type="PDB" id="6S05">
    <property type="method" value="EM"/>
    <property type="resolution" value="3.90 A"/>
    <property type="chains" value="R=1-189"/>
</dbReference>
<dbReference type="PDB" id="6S47">
    <property type="method" value="EM"/>
    <property type="resolution" value="3.28 A"/>
    <property type="chains" value="AT=2-189"/>
</dbReference>
<dbReference type="PDB" id="6SNT">
    <property type="method" value="EM"/>
    <property type="resolution" value="2.80 A"/>
    <property type="chains" value="x=1-189"/>
</dbReference>
<dbReference type="PDB" id="6SV4">
    <property type="method" value="EM"/>
    <property type="resolution" value="3.30 A"/>
    <property type="chains" value="BF/YF/ZF=1-189"/>
</dbReference>
<dbReference type="PDB" id="6T4Q">
    <property type="method" value="EM"/>
    <property type="resolution" value="2.60 A"/>
    <property type="chains" value="LR=2-189"/>
</dbReference>
<dbReference type="PDB" id="6T7I">
    <property type="method" value="EM"/>
    <property type="resolution" value="3.20 A"/>
    <property type="chains" value="LR=1-189"/>
</dbReference>
<dbReference type="PDB" id="6T7T">
    <property type="method" value="EM"/>
    <property type="resolution" value="3.10 A"/>
    <property type="chains" value="LR=1-189"/>
</dbReference>
<dbReference type="PDB" id="6T83">
    <property type="method" value="EM"/>
    <property type="resolution" value="4.00 A"/>
    <property type="chains" value="C/Ry=1-189"/>
</dbReference>
<dbReference type="PDB" id="6TB3">
    <property type="method" value="EM"/>
    <property type="resolution" value="2.80 A"/>
    <property type="chains" value="BF=2-189"/>
</dbReference>
<dbReference type="PDB" id="6TNU">
    <property type="method" value="EM"/>
    <property type="resolution" value="3.10 A"/>
    <property type="chains" value="BF=2-189"/>
</dbReference>
<dbReference type="PDB" id="6WOO">
    <property type="method" value="EM"/>
    <property type="resolution" value="2.90 A"/>
    <property type="chains" value="R=2-189"/>
</dbReference>
<dbReference type="PDB" id="6XIQ">
    <property type="method" value="EM"/>
    <property type="resolution" value="4.20 A"/>
    <property type="chains" value="R=1-189"/>
</dbReference>
<dbReference type="PDB" id="6XIR">
    <property type="method" value="EM"/>
    <property type="resolution" value="3.20 A"/>
    <property type="chains" value="R=1-189"/>
</dbReference>
<dbReference type="PDB" id="6YLG">
    <property type="method" value="EM"/>
    <property type="resolution" value="3.00 A"/>
    <property type="chains" value="R=1-189"/>
</dbReference>
<dbReference type="PDB" id="6YLH">
    <property type="method" value="EM"/>
    <property type="resolution" value="3.10 A"/>
    <property type="chains" value="R=1-189"/>
</dbReference>
<dbReference type="PDB" id="6YLX">
    <property type="method" value="EM"/>
    <property type="resolution" value="3.90 A"/>
    <property type="chains" value="R=1-189"/>
</dbReference>
<dbReference type="PDB" id="6YLY">
    <property type="method" value="EM"/>
    <property type="resolution" value="3.80 A"/>
    <property type="chains" value="R=1-189"/>
</dbReference>
<dbReference type="PDB" id="6Z6J">
    <property type="method" value="EM"/>
    <property type="resolution" value="3.40 A"/>
    <property type="chains" value="LR=1-189"/>
</dbReference>
<dbReference type="PDB" id="6Z6K">
    <property type="method" value="EM"/>
    <property type="resolution" value="3.40 A"/>
    <property type="chains" value="LR=1-189"/>
</dbReference>
<dbReference type="PDB" id="7AZY">
    <property type="method" value="EM"/>
    <property type="resolution" value="2.88 A"/>
    <property type="chains" value="H=1-189"/>
</dbReference>
<dbReference type="PDB" id="7B7D">
    <property type="method" value="EM"/>
    <property type="resolution" value="3.30 A"/>
    <property type="chains" value="Ln=2-189"/>
</dbReference>
<dbReference type="PDB" id="7BT6">
    <property type="method" value="EM"/>
    <property type="resolution" value="3.12 A"/>
    <property type="chains" value="R=1-189"/>
</dbReference>
<dbReference type="PDB" id="7BTB">
    <property type="method" value="EM"/>
    <property type="resolution" value="3.22 A"/>
    <property type="chains" value="R=1-189"/>
</dbReference>
<dbReference type="PDB" id="7MPI">
    <property type="method" value="EM"/>
    <property type="resolution" value="3.05 A"/>
    <property type="chains" value="AR=2-189"/>
</dbReference>
<dbReference type="PDB" id="7MPJ">
    <property type="method" value="EM"/>
    <property type="resolution" value="2.70 A"/>
    <property type="chains" value="AR=2-189"/>
</dbReference>
<dbReference type="PDB" id="7N8B">
    <property type="method" value="EM"/>
    <property type="resolution" value="3.05 A"/>
    <property type="chains" value="AR=2-189"/>
</dbReference>
<dbReference type="PDB" id="7NAC">
    <property type="method" value="EM"/>
    <property type="resolution" value="3.04 A"/>
    <property type="chains" value="R=1-189"/>
</dbReference>
<dbReference type="PDB" id="7NAD">
    <property type="method" value="EM"/>
    <property type="resolution" value="3.04 A"/>
    <property type="chains" value="R=1-189"/>
</dbReference>
<dbReference type="PDB" id="7NAF">
    <property type="method" value="EM"/>
    <property type="resolution" value="3.13 A"/>
    <property type="chains" value="R=88-145"/>
</dbReference>
<dbReference type="PDB" id="7NRC">
    <property type="method" value="EM"/>
    <property type="resolution" value="3.90 A"/>
    <property type="chains" value="LT=2-189"/>
</dbReference>
<dbReference type="PDB" id="7NRD">
    <property type="method" value="EM"/>
    <property type="resolution" value="4.36 A"/>
    <property type="chains" value="LT=2-189"/>
</dbReference>
<dbReference type="PDB" id="7OF1">
    <property type="method" value="EM"/>
    <property type="resolution" value="3.10 A"/>
    <property type="chains" value="R=1-189"/>
</dbReference>
<dbReference type="PDB" id="7OH3">
    <property type="method" value="EM"/>
    <property type="resolution" value="3.40 A"/>
    <property type="chains" value="R=1-189"/>
</dbReference>
<dbReference type="PDB" id="7OHQ">
    <property type="method" value="EM"/>
    <property type="resolution" value="3.10 A"/>
    <property type="chains" value="R=1-189"/>
</dbReference>
<dbReference type="PDB" id="7OHR">
    <property type="method" value="EM"/>
    <property type="resolution" value="4.72 A"/>
    <property type="chains" value="R=1-189"/>
</dbReference>
<dbReference type="PDB" id="7OHV">
    <property type="method" value="EM"/>
    <property type="resolution" value="3.90 A"/>
    <property type="chains" value="R=1-189"/>
</dbReference>
<dbReference type="PDB" id="7OSA">
    <property type="method" value="X-ray"/>
    <property type="resolution" value="3.00 A"/>
    <property type="chains" value="eL19=1-189"/>
</dbReference>
<dbReference type="PDB" id="7OSM">
    <property type="method" value="X-ray"/>
    <property type="resolution" value="3.00 A"/>
    <property type="chains" value="eL19=1-189"/>
</dbReference>
<dbReference type="PDB" id="7R72">
    <property type="method" value="EM"/>
    <property type="resolution" value="3.07 A"/>
    <property type="chains" value="R=1-189"/>
</dbReference>
<dbReference type="PDB" id="7R7A">
    <property type="method" value="EM"/>
    <property type="resolution" value="3.04 A"/>
    <property type="chains" value="R=1-189"/>
</dbReference>
<dbReference type="PDB" id="7RR5">
    <property type="method" value="EM"/>
    <property type="resolution" value="3.23 A"/>
    <property type="chains" value="LR=1-189"/>
</dbReference>
<dbReference type="PDB" id="7TOO">
    <property type="method" value="EM"/>
    <property type="resolution" value="2.70 A"/>
    <property type="chains" value="AL19=1-189"/>
</dbReference>
<dbReference type="PDB" id="7TOP">
    <property type="method" value="EM"/>
    <property type="resolution" value="2.40 A"/>
    <property type="chains" value="AL19=1-189"/>
</dbReference>
<dbReference type="PDB" id="7U0H">
    <property type="method" value="EM"/>
    <property type="resolution" value="2.76 A"/>
    <property type="chains" value="R=1-189"/>
</dbReference>
<dbReference type="PDB" id="7UG6">
    <property type="method" value="EM"/>
    <property type="resolution" value="2.90 A"/>
    <property type="chains" value="R=1-189"/>
</dbReference>
<dbReference type="PDB" id="7UOO">
    <property type="method" value="EM"/>
    <property type="resolution" value="2.34 A"/>
    <property type="chains" value="R=1-189"/>
</dbReference>
<dbReference type="PDB" id="7UQB">
    <property type="method" value="EM"/>
    <property type="resolution" value="2.43 A"/>
    <property type="chains" value="R=1-189"/>
</dbReference>
<dbReference type="PDB" id="7UQZ">
    <property type="method" value="EM"/>
    <property type="resolution" value="2.44 A"/>
    <property type="chains" value="R=1-189"/>
</dbReference>
<dbReference type="PDB" id="7V08">
    <property type="method" value="EM"/>
    <property type="resolution" value="2.36 A"/>
    <property type="chains" value="R=1-189"/>
</dbReference>
<dbReference type="PDB" id="7Z34">
    <property type="method" value="EM"/>
    <property type="resolution" value="3.80 A"/>
    <property type="chains" value="R=1-189"/>
</dbReference>
<dbReference type="PDB" id="7ZPQ">
    <property type="method" value="EM"/>
    <property type="resolution" value="3.47 A"/>
    <property type="chains" value="BQ=2-189"/>
</dbReference>
<dbReference type="PDB" id="7ZRS">
    <property type="method" value="EM"/>
    <property type="resolution" value="4.80 A"/>
    <property type="chains" value="BQ=2-189"/>
</dbReference>
<dbReference type="PDB" id="7ZS5">
    <property type="method" value="EM"/>
    <property type="resolution" value="3.20 A"/>
    <property type="chains" value="BS=2-161"/>
</dbReference>
<dbReference type="PDB" id="7ZUW">
    <property type="method" value="EM"/>
    <property type="resolution" value="4.30 A"/>
    <property type="chains" value="BQ=2-189"/>
</dbReference>
<dbReference type="PDB" id="7ZUX">
    <property type="method" value="EM"/>
    <property type="resolution" value="2.50 A"/>
    <property type="chains" value="EQ=2-189"/>
</dbReference>
<dbReference type="PDB" id="7ZW0">
    <property type="method" value="EM"/>
    <property type="resolution" value="2.40 A"/>
    <property type="chains" value="LU=1-189"/>
</dbReference>
<dbReference type="PDB" id="8AAF">
    <property type="method" value="EM"/>
    <property type="resolution" value="2.50 A"/>
    <property type="chains" value="E=1-189"/>
</dbReference>
<dbReference type="PDB" id="8AGT">
    <property type="method" value="EM"/>
    <property type="resolution" value="2.60 A"/>
    <property type="chains" value="E=1-189"/>
</dbReference>
<dbReference type="PDB" id="8AGU">
    <property type="method" value="EM"/>
    <property type="resolution" value="2.70 A"/>
    <property type="chains" value="E=1-189"/>
</dbReference>
<dbReference type="PDB" id="8AGV">
    <property type="method" value="EM"/>
    <property type="resolution" value="2.60 A"/>
    <property type="chains" value="E=1-189"/>
</dbReference>
<dbReference type="PDB" id="8AGW">
    <property type="method" value="EM"/>
    <property type="resolution" value="2.60 A"/>
    <property type="chains" value="E=1-189"/>
</dbReference>
<dbReference type="PDB" id="8AGX">
    <property type="method" value="EM"/>
    <property type="resolution" value="2.40 A"/>
    <property type="chains" value="E=1-189"/>
</dbReference>
<dbReference type="PDB" id="8AGZ">
    <property type="method" value="EM"/>
    <property type="resolution" value="2.60 A"/>
    <property type="chains" value="E=1-189"/>
</dbReference>
<dbReference type="PDB" id="8BIP">
    <property type="method" value="EM"/>
    <property type="resolution" value="3.10 A"/>
    <property type="chains" value="LR=2-189"/>
</dbReference>
<dbReference type="PDB" id="8BJQ">
    <property type="method" value="EM"/>
    <property type="resolution" value="3.80 A"/>
    <property type="chains" value="LR=2-189"/>
</dbReference>
<dbReference type="PDB" id="8BN3">
    <property type="method" value="EM"/>
    <property type="resolution" value="2.40 A"/>
    <property type="chains" value="M9=2-189"/>
</dbReference>
<dbReference type="PDB" id="8BQD">
    <property type="method" value="EM"/>
    <property type="resolution" value="3.90 A"/>
    <property type="chains" value="BF=2-189"/>
</dbReference>
<dbReference type="PDB" id="8BQX">
    <property type="method" value="EM"/>
    <property type="resolution" value="3.80 A"/>
    <property type="chains" value="BF=2-189"/>
</dbReference>
<dbReference type="PDB" id="8CCS">
    <property type="method" value="EM"/>
    <property type="resolution" value="1.97 A"/>
    <property type="chains" value="D=1-189"/>
</dbReference>
<dbReference type="PDB" id="8CDL">
    <property type="method" value="EM"/>
    <property type="resolution" value="2.72 A"/>
    <property type="chains" value="D=1-189"/>
</dbReference>
<dbReference type="PDB" id="8CDR">
    <property type="method" value="EM"/>
    <property type="resolution" value="2.04 A"/>
    <property type="chains" value="D=1-189"/>
</dbReference>
<dbReference type="PDB" id="8CEH">
    <property type="method" value="EM"/>
    <property type="resolution" value="2.05 A"/>
    <property type="chains" value="D=1-189"/>
</dbReference>
<dbReference type="PDB" id="8CF5">
    <property type="method" value="EM"/>
    <property type="resolution" value="2.71 A"/>
    <property type="chains" value="D=1-189"/>
</dbReference>
<dbReference type="PDB" id="8CG8">
    <property type="method" value="EM"/>
    <property type="resolution" value="2.57 A"/>
    <property type="chains" value="D=1-189"/>
</dbReference>
<dbReference type="PDB" id="8CGN">
    <property type="method" value="EM"/>
    <property type="resolution" value="2.28 A"/>
    <property type="chains" value="D=1-189"/>
</dbReference>
<dbReference type="PDB" id="8CIV">
    <property type="method" value="EM"/>
    <property type="resolution" value="2.47 A"/>
    <property type="chains" value="D=1-189"/>
</dbReference>
<dbReference type="PDB" id="8CKU">
    <property type="method" value="EM"/>
    <property type="resolution" value="3.11 A"/>
    <property type="chains" value="D=1-189"/>
</dbReference>
<dbReference type="PDB" id="8CMJ">
    <property type="method" value="EM"/>
    <property type="resolution" value="3.79 A"/>
    <property type="chains" value="D=1-189"/>
</dbReference>
<dbReference type="PDB" id="8EUB">
    <property type="method" value="EM"/>
    <property type="resolution" value="2.52 A"/>
    <property type="chains" value="AR=1-189"/>
</dbReference>
<dbReference type="PDB" id="8EVP">
    <property type="method" value="EM"/>
    <property type="resolution" value="2.38 A"/>
    <property type="chains" value="AR=1-189"/>
</dbReference>
<dbReference type="PDB" id="8EVQ">
    <property type="method" value="EM"/>
    <property type="resolution" value="2.72 A"/>
    <property type="chains" value="AR=1-189"/>
</dbReference>
<dbReference type="PDB" id="8EVR">
    <property type="method" value="EM"/>
    <property type="resolution" value="2.87 A"/>
    <property type="chains" value="AR=1-189"/>
</dbReference>
<dbReference type="PDB" id="8EVS">
    <property type="method" value="EM"/>
    <property type="resolution" value="2.62 A"/>
    <property type="chains" value="AR=1-189"/>
</dbReference>
<dbReference type="PDB" id="8EVT">
    <property type="method" value="EM"/>
    <property type="resolution" value="2.20 A"/>
    <property type="chains" value="AR=1-189"/>
</dbReference>
<dbReference type="PDB" id="8EWB">
    <property type="method" value="EM"/>
    <property type="resolution" value="2.87 A"/>
    <property type="chains" value="AR=1-189"/>
</dbReference>
<dbReference type="PDB" id="8EWC">
    <property type="method" value="EM"/>
    <property type="resolution" value="2.45 A"/>
    <property type="chains" value="AR=1-189"/>
</dbReference>
<dbReference type="PDB" id="8HFR">
    <property type="method" value="EM"/>
    <property type="resolution" value="2.64 A"/>
    <property type="chains" value="RP=1-189"/>
</dbReference>
<dbReference type="PDB" id="8K2D">
    <property type="method" value="EM"/>
    <property type="resolution" value="3.20 A"/>
    <property type="chains" value="LR=1-189"/>
</dbReference>
<dbReference type="PDB" id="8K82">
    <property type="method" value="EM"/>
    <property type="resolution" value="3.00 A"/>
    <property type="chains" value="LR=1-189"/>
</dbReference>
<dbReference type="PDB" id="8P4V">
    <property type="method" value="X-ray"/>
    <property type="resolution" value="3.16 A"/>
    <property type="chains" value="CT/z=1-189"/>
</dbReference>
<dbReference type="PDB" id="8P8M">
    <property type="method" value="EM"/>
    <property type="resolution" value="2.66 A"/>
    <property type="chains" value="QQ=1-189"/>
</dbReference>
<dbReference type="PDB" id="8P8N">
    <property type="method" value="EM"/>
    <property type="resolution" value="2.15 A"/>
    <property type="chains" value="QQ=1-189"/>
</dbReference>
<dbReference type="PDB" id="8P8U">
    <property type="method" value="EM"/>
    <property type="resolution" value="2.23 A"/>
    <property type="chains" value="QQ=1-189"/>
</dbReference>
<dbReference type="PDB" id="8P9A">
    <property type="method" value="X-ray"/>
    <property type="resolution" value="2.90 A"/>
    <property type="chains" value="CT/z=1-189"/>
</dbReference>
<dbReference type="PDB" id="8PFR">
    <property type="method" value="EM"/>
    <property type="resolution" value="2.15 A"/>
    <property type="chains" value="QQ=1-189"/>
</dbReference>
<dbReference type="PDB" id="8T2X">
    <property type="method" value="EM"/>
    <property type="resolution" value="2.46 A"/>
    <property type="chains" value="AR=1-189"/>
</dbReference>
<dbReference type="PDB" id="8T2Y">
    <property type="method" value="EM"/>
    <property type="resolution" value="2.20 A"/>
    <property type="chains" value="AR=1-189"/>
</dbReference>
<dbReference type="PDB" id="8T2Z">
    <property type="method" value="EM"/>
    <property type="resolution" value="2.40 A"/>
    <property type="chains" value="AR=1-189"/>
</dbReference>
<dbReference type="PDB" id="8T30">
    <property type="method" value="EM"/>
    <property type="resolution" value="2.88 A"/>
    <property type="chains" value="AR=1-189"/>
</dbReference>
<dbReference type="PDB" id="8T3A">
    <property type="method" value="EM"/>
    <property type="resolution" value="2.86 A"/>
    <property type="chains" value="AR=1-189"/>
</dbReference>
<dbReference type="PDB" id="8T3B">
    <property type="method" value="EM"/>
    <property type="resolution" value="3.08 A"/>
    <property type="chains" value="AR=1-189"/>
</dbReference>
<dbReference type="PDB" id="8T3C">
    <property type="method" value="EM"/>
    <property type="resolution" value="3.86 A"/>
    <property type="chains" value="AR=1-189"/>
</dbReference>
<dbReference type="PDB" id="8T3D">
    <property type="method" value="EM"/>
    <property type="resolution" value="2.95 A"/>
    <property type="chains" value="AR=1-189"/>
</dbReference>
<dbReference type="PDB" id="8T3E">
    <property type="method" value="EM"/>
    <property type="resolution" value="3.04 A"/>
    <property type="chains" value="AR=1-189"/>
</dbReference>
<dbReference type="PDB" id="8T3F">
    <property type="method" value="EM"/>
    <property type="resolution" value="3.09 A"/>
    <property type="chains" value="AR=1-189"/>
</dbReference>
<dbReference type="PDB" id="8UT0">
    <property type="method" value="EM"/>
    <property type="resolution" value="3.22 A"/>
    <property type="chains" value="LT=2-189"/>
</dbReference>
<dbReference type="PDB" id="8UTI">
    <property type="method" value="EM"/>
    <property type="resolution" value="3.13 A"/>
    <property type="chains" value="LT=2-189"/>
</dbReference>
<dbReference type="PDB" id="8V87">
    <property type="method" value="EM"/>
    <property type="resolution" value="2.66 A"/>
    <property type="chains" value="R=1-189"/>
</dbReference>
<dbReference type="PDB" id="8XU8">
    <property type="method" value="EM"/>
    <property type="resolution" value="3.40 A"/>
    <property type="chains" value="T=2-189"/>
</dbReference>
<dbReference type="PDB" id="8Y0U">
    <property type="method" value="EM"/>
    <property type="resolution" value="3.59 A"/>
    <property type="chains" value="LR=1-189"/>
</dbReference>
<dbReference type="PDB" id="8YLD">
    <property type="method" value="EM"/>
    <property type="resolution" value="3.90 A"/>
    <property type="chains" value="T=2-189"/>
</dbReference>
<dbReference type="PDB" id="8YLR">
    <property type="method" value="EM"/>
    <property type="resolution" value="3.90 A"/>
    <property type="chains" value="T=2-189"/>
</dbReference>
<dbReference type="PDB" id="8Z70">
    <property type="method" value="EM"/>
    <property type="resolution" value="3.20 A"/>
    <property type="chains" value="T=2-189"/>
</dbReference>
<dbReference type="PDB" id="8Z71">
    <property type="method" value="EM"/>
    <property type="resolution" value="3.60 A"/>
    <property type="chains" value="T=2-189"/>
</dbReference>
<dbReference type="PDB" id="9F9S">
    <property type="method" value="EM"/>
    <property type="resolution" value="2.90 A"/>
    <property type="chains" value="LM/MM=1-189"/>
</dbReference>
<dbReference type="PDBsum" id="2WW9"/>
<dbReference type="PDBsum" id="2WWA"/>
<dbReference type="PDBsum" id="3J6X"/>
<dbReference type="PDBsum" id="3J6Y"/>
<dbReference type="PDBsum" id="3J77"/>
<dbReference type="PDBsum" id="3J78"/>
<dbReference type="PDBsum" id="3JCT"/>
<dbReference type="PDBsum" id="4U3M"/>
<dbReference type="PDBsum" id="4U3N"/>
<dbReference type="PDBsum" id="4U3U"/>
<dbReference type="PDBsum" id="4U4N"/>
<dbReference type="PDBsum" id="4U4O"/>
<dbReference type="PDBsum" id="4U4Q"/>
<dbReference type="PDBsum" id="4U4R"/>
<dbReference type="PDBsum" id="4U4U"/>
<dbReference type="PDBsum" id="4U4Y"/>
<dbReference type="PDBsum" id="4U4Z"/>
<dbReference type="PDBsum" id="4U50"/>
<dbReference type="PDBsum" id="4U51"/>
<dbReference type="PDBsum" id="4U52"/>
<dbReference type="PDBsum" id="4U53"/>
<dbReference type="PDBsum" id="4U55"/>
<dbReference type="PDBsum" id="4U56"/>
<dbReference type="PDBsum" id="4U6F"/>
<dbReference type="PDBsum" id="4V4B"/>
<dbReference type="PDBsum" id="4V6I"/>
<dbReference type="PDBsum" id="4V7F"/>
<dbReference type="PDBsum" id="4V7R"/>
<dbReference type="PDBsum" id="4V88"/>
<dbReference type="PDBsum" id="4V91"/>
<dbReference type="PDBsum" id="5APN"/>
<dbReference type="PDBsum" id="5APO"/>
<dbReference type="PDBsum" id="5DAT"/>
<dbReference type="PDBsum" id="5DC3"/>
<dbReference type="PDBsum" id="5DGE"/>
<dbReference type="PDBsum" id="5DGF"/>
<dbReference type="PDBsum" id="5DGV"/>
<dbReference type="PDBsum" id="5FCI"/>
<dbReference type="PDBsum" id="5FCJ"/>
<dbReference type="PDBsum" id="5GAK"/>
<dbReference type="PDBsum" id="5H4P"/>
<dbReference type="PDBsum" id="5I4L"/>
<dbReference type="PDBsum" id="5JCS"/>
<dbReference type="PDBsum" id="5JUO"/>
<dbReference type="PDBsum" id="5JUP"/>
<dbReference type="PDBsum" id="5JUS"/>
<dbReference type="PDBsum" id="5JUT"/>
<dbReference type="PDBsum" id="5JUU"/>
<dbReference type="PDBsum" id="5LYB"/>
<dbReference type="PDBsum" id="5M1J"/>
<dbReference type="PDBsum" id="5MC6"/>
<dbReference type="PDBsum" id="5MEI"/>
<dbReference type="PDBsum" id="5NDG"/>
<dbReference type="PDBsum" id="5NDV"/>
<dbReference type="PDBsum" id="5NDW"/>
<dbReference type="PDBsum" id="5OBM"/>
<dbReference type="PDBsum" id="5ON6"/>
<dbReference type="PDBsum" id="5T62"/>
<dbReference type="PDBsum" id="5T6R"/>
<dbReference type="PDBsum" id="5TBW"/>
<dbReference type="PDBsum" id="5TGA"/>
<dbReference type="PDBsum" id="5TGM"/>
<dbReference type="PDBsum" id="6ELZ"/>
<dbReference type="PDBsum" id="6EM5"/>
<dbReference type="PDBsum" id="6FT6"/>
<dbReference type="PDBsum" id="6GQ1"/>
<dbReference type="PDBsum" id="6GQB"/>
<dbReference type="PDBsum" id="6GQV"/>
<dbReference type="PDBsum" id="6HD7"/>
<dbReference type="PDBsum" id="6HHQ"/>
<dbReference type="PDBsum" id="6I7O"/>
<dbReference type="PDBsum" id="6M62"/>
<dbReference type="PDBsum" id="6N8J"/>
<dbReference type="PDBsum" id="6N8K"/>
<dbReference type="PDBsum" id="6N8L"/>
<dbReference type="PDBsum" id="6N8M"/>
<dbReference type="PDBsum" id="6N8N"/>
<dbReference type="PDBsum" id="6N8O"/>
<dbReference type="PDBsum" id="6OIG"/>
<dbReference type="PDBsum" id="6Q8Y"/>
<dbReference type="PDBsum" id="6QIK"/>
<dbReference type="PDBsum" id="6QT0"/>
<dbReference type="PDBsum" id="6QTZ"/>
<dbReference type="PDBsum" id="6R84"/>
<dbReference type="PDBsum" id="6R86"/>
<dbReference type="PDBsum" id="6R87"/>
<dbReference type="PDBsum" id="6RI5"/>
<dbReference type="PDBsum" id="6RZZ"/>
<dbReference type="PDBsum" id="6S05"/>
<dbReference type="PDBsum" id="6S47"/>
<dbReference type="PDBsum" id="6SNT"/>
<dbReference type="PDBsum" id="6SV4"/>
<dbReference type="PDBsum" id="6T4Q"/>
<dbReference type="PDBsum" id="6T7I"/>
<dbReference type="PDBsum" id="6T7T"/>
<dbReference type="PDBsum" id="6T83"/>
<dbReference type="PDBsum" id="6TB3"/>
<dbReference type="PDBsum" id="6TNU"/>
<dbReference type="PDBsum" id="6WOO"/>
<dbReference type="PDBsum" id="6XIQ"/>
<dbReference type="PDBsum" id="6XIR"/>
<dbReference type="PDBsum" id="6YLG"/>
<dbReference type="PDBsum" id="6YLH"/>
<dbReference type="PDBsum" id="6YLX"/>
<dbReference type="PDBsum" id="6YLY"/>
<dbReference type="PDBsum" id="6Z6J"/>
<dbReference type="PDBsum" id="6Z6K"/>
<dbReference type="PDBsum" id="7AZY"/>
<dbReference type="PDBsum" id="7B7D"/>
<dbReference type="PDBsum" id="7BT6"/>
<dbReference type="PDBsum" id="7BTB"/>
<dbReference type="PDBsum" id="7MPI"/>
<dbReference type="PDBsum" id="7MPJ"/>
<dbReference type="PDBsum" id="7N8B"/>
<dbReference type="PDBsum" id="7NAC"/>
<dbReference type="PDBsum" id="7NAD"/>
<dbReference type="PDBsum" id="7NAF"/>
<dbReference type="PDBsum" id="7NRC"/>
<dbReference type="PDBsum" id="7NRD"/>
<dbReference type="PDBsum" id="7OF1"/>
<dbReference type="PDBsum" id="7OH3"/>
<dbReference type="PDBsum" id="7OHQ"/>
<dbReference type="PDBsum" id="7OHR"/>
<dbReference type="PDBsum" id="7OHV"/>
<dbReference type="PDBsum" id="7OSA"/>
<dbReference type="PDBsum" id="7OSM"/>
<dbReference type="PDBsum" id="7R72"/>
<dbReference type="PDBsum" id="7R7A"/>
<dbReference type="PDBsum" id="7RR5"/>
<dbReference type="PDBsum" id="7TOO"/>
<dbReference type="PDBsum" id="7TOP"/>
<dbReference type="PDBsum" id="7U0H"/>
<dbReference type="PDBsum" id="7UG6"/>
<dbReference type="PDBsum" id="7UOO"/>
<dbReference type="PDBsum" id="7UQB"/>
<dbReference type="PDBsum" id="7UQZ"/>
<dbReference type="PDBsum" id="7V08"/>
<dbReference type="PDBsum" id="7Z34"/>
<dbReference type="PDBsum" id="7ZPQ"/>
<dbReference type="PDBsum" id="7ZRS"/>
<dbReference type="PDBsum" id="7ZS5"/>
<dbReference type="PDBsum" id="7ZUW"/>
<dbReference type="PDBsum" id="7ZUX"/>
<dbReference type="PDBsum" id="7ZW0"/>
<dbReference type="PDBsum" id="8AAF"/>
<dbReference type="PDBsum" id="8AGT"/>
<dbReference type="PDBsum" id="8AGU"/>
<dbReference type="PDBsum" id="8AGV"/>
<dbReference type="PDBsum" id="8AGW"/>
<dbReference type="PDBsum" id="8AGX"/>
<dbReference type="PDBsum" id="8AGZ"/>
<dbReference type="PDBsum" id="8BIP"/>
<dbReference type="PDBsum" id="8BJQ"/>
<dbReference type="PDBsum" id="8BN3"/>
<dbReference type="PDBsum" id="8BQD"/>
<dbReference type="PDBsum" id="8BQX"/>
<dbReference type="PDBsum" id="8CCS"/>
<dbReference type="PDBsum" id="8CDL"/>
<dbReference type="PDBsum" id="8CDR"/>
<dbReference type="PDBsum" id="8CEH"/>
<dbReference type="PDBsum" id="8CF5"/>
<dbReference type="PDBsum" id="8CG8"/>
<dbReference type="PDBsum" id="8CGN"/>
<dbReference type="PDBsum" id="8CIV"/>
<dbReference type="PDBsum" id="8CKU"/>
<dbReference type="PDBsum" id="8CMJ"/>
<dbReference type="PDBsum" id="8EUB"/>
<dbReference type="PDBsum" id="8EVP"/>
<dbReference type="PDBsum" id="8EVQ"/>
<dbReference type="PDBsum" id="8EVR"/>
<dbReference type="PDBsum" id="8EVS"/>
<dbReference type="PDBsum" id="8EVT"/>
<dbReference type="PDBsum" id="8EWB"/>
<dbReference type="PDBsum" id="8EWC"/>
<dbReference type="PDBsum" id="8HFR"/>
<dbReference type="PDBsum" id="8K2D"/>
<dbReference type="PDBsum" id="8K82"/>
<dbReference type="PDBsum" id="8P4V"/>
<dbReference type="PDBsum" id="8P8M"/>
<dbReference type="PDBsum" id="8P8N"/>
<dbReference type="PDBsum" id="8P8U"/>
<dbReference type="PDBsum" id="8P9A"/>
<dbReference type="PDBsum" id="8PFR"/>
<dbReference type="PDBsum" id="8T2X"/>
<dbReference type="PDBsum" id="8T2Y"/>
<dbReference type="PDBsum" id="8T2Z"/>
<dbReference type="PDBsum" id="8T30"/>
<dbReference type="PDBsum" id="8T3A"/>
<dbReference type="PDBsum" id="8T3B"/>
<dbReference type="PDBsum" id="8T3C"/>
<dbReference type="PDBsum" id="8T3D"/>
<dbReference type="PDBsum" id="8T3E"/>
<dbReference type="PDBsum" id="8T3F"/>
<dbReference type="PDBsum" id="8UT0"/>
<dbReference type="PDBsum" id="8UTI"/>
<dbReference type="PDBsum" id="8V87"/>
<dbReference type="PDBsum" id="8XU8"/>
<dbReference type="PDBsum" id="8Y0U"/>
<dbReference type="PDBsum" id="8YLD"/>
<dbReference type="PDBsum" id="8YLR"/>
<dbReference type="PDBsum" id="8Z70"/>
<dbReference type="PDBsum" id="8Z71"/>
<dbReference type="PDBsum" id="9F9S"/>
<dbReference type="EMDB" id="EMD-0047"/>
<dbReference type="EMDB" id="EMD-0048"/>
<dbReference type="EMDB" id="EMD-0049"/>
<dbReference type="EMDB" id="EMD-0202"/>
<dbReference type="EMDB" id="EMD-0369"/>
<dbReference type="EMDB" id="EMD-0370"/>
<dbReference type="EMDB" id="EMD-0371"/>
<dbReference type="EMDB" id="EMD-0372"/>
<dbReference type="EMDB" id="EMD-0373"/>
<dbReference type="EMDB" id="EMD-0374"/>
<dbReference type="EMDB" id="EMD-10068"/>
<dbReference type="EMDB" id="EMD-10071"/>
<dbReference type="EMDB" id="EMD-10098"/>
<dbReference type="EMDB" id="EMD-10262"/>
<dbReference type="EMDB" id="EMD-10315"/>
<dbReference type="EMDB" id="EMD-10377"/>
<dbReference type="EMDB" id="EMD-10396"/>
<dbReference type="EMDB" id="EMD-10397"/>
<dbReference type="EMDB" id="EMD-10398"/>
<dbReference type="EMDB" id="EMD-10431"/>
<dbReference type="EMDB" id="EMD-10537"/>
<dbReference type="EMDB" id="EMD-10838"/>
<dbReference type="EMDB" id="EMD-10839"/>
<dbReference type="EMDB" id="EMD-10841"/>
<dbReference type="EMDB" id="EMD-10842"/>
<dbReference type="EMDB" id="EMD-11096"/>
<dbReference type="EMDB" id="EMD-11097"/>
<dbReference type="EMDB" id="EMD-11951"/>
<dbReference type="EMDB" id="EMD-12081"/>
<dbReference type="EMDB" id="EMD-12534"/>
<dbReference type="EMDB" id="EMD-12535"/>
<dbReference type="EMDB" id="EMD-12866"/>
<dbReference type="EMDB" id="EMD-12892"/>
<dbReference type="EMDB" id="EMD-12905"/>
<dbReference type="EMDB" id="EMD-12906"/>
<dbReference type="EMDB" id="EMD-12910"/>
<dbReference type="EMDB" id="EMD-14471"/>
<dbReference type="EMDB" id="EMD-14861"/>
<dbReference type="EMDB" id="EMD-14921"/>
<dbReference type="EMDB" id="EMD-14926"/>
<dbReference type="EMDB" id="EMD-14978"/>
<dbReference type="EMDB" id="EMD-14979"/>
<dbReference type="EMDB" id="EMD-14990"/>
<dbReference type="EMDB" id="EMD-15296"/>
<dbReference type="EMDB" id="EMD-15423"/>
<dbReference type="EMDB" id="EMD-15424"/>
<dbReference type="EMDB" id="EMD-15425"/>
<dbReference type="EMDB" id="EMD-15426"/>
<dbReference type="EMDB" id="EMD-15427"/>
<dbReference type="EMDB" id="EMD-15428"/>
<dbReference type="EMDB" id="EMD-16086"/>
<dbReference type="EMDB" id="EMD-16090"/>
<dbReference type="EMDB" id="EMD-16127"/>
<dbReference type="EMDB" id="EMD-16182"/>
<dbReference type="EMDB" id="EMD-16191"/>
<dbReference type="EMDB" id="EMD-16563"/>
<dbReference type="EMDB" id="EMD-16591"/>
<dbReference type="EMDB" id="EMD-16594"/>
<dbReference type="EMDB" id="EMD-16609"/>
<dbReference type="EMDB" id="EMD-16616"/>
<dbReference type="EMDB" id="EMD-16634"/>
<dbReference type="EMDB" id="EMD-16648"/>
<dbReference type="EMDB" id="EMD-16684"/>
<dbReference type="EMDB" id="EMD-16702"/>
<dbReference type="EMDB" id="EMD-16729"/>
<dbReference type="EMDB" id="EMD-17549"/>
<dbReference type="EMDB" id="EMD-17550"/>
<dbReference type="EMDB" id="EMD-17552"/>
<dbReference type="EMDB" id="EMD-17653"/>
<dbReference type="EMDB" id="EMD-20077"/>
<dbReference type="EMDB" id="EMD-21859"/>
<dbReference type="EMDB" id="EMD-22196"/>
<dbReference type="EMDB" id="EMD-22198"/>
<dbReference type="EMDB" id="EMD-23934"/>
<dbReference type="EMDB" id="EMD-23935"/>
<dbReference type="EMDB" id="EMD-24235"/>
<dbReference type="EMDB" id="EMD-24269"/>
<dbReference type="EMDB" id="EMD-24270"/>
<dbReference type="EMDB" id="EMD-24290"/>
<dbReference type="EMDB" id="EMD-24296"/>
<dbReference type="EMDB" id="EMD-24652"/>
<dbReference type="EMDB" id="EMD-26033"/>
<dbReference type="EMDB" id="EMD-26034"/>
<dbReference type="EMDB" id="EMD-26259"/>
<dbReference type="EMDB" id="EMD-26485"/>
<dbReference type="EMDB" id="EMD-26651"/>
<dbReference type="EMDB" id="EMD-26686"/>
<dbReference type="EMDB" id="EMD-26703"/>
<dbReference type="EMDB" id="EMD-26941"/>
<dbReference type="EMDB" id="EMD-28610"/>
<dbReference type="EMDB" id="EMD-28632"/>
<dbReference type="EMDB" id="EMD-28633"/>
<dbReference type="EMDB" id="EMD-28634"/>
<dbReference type="EMDB" id="EMD-28635"/>
<dbReference type="EMDB" id="EMD-28636"/>
<dbReference type="EMDB" id="EMD-28642"/>
<dbReference type="EMDB" id="EMD-28643"/>
<dbReference type="EMDB" id="EMD-30108"/>
<dbReference type="EMDB" id="EMD-30170"/>
<dbReference type="EMDB" id="EMD-30174"/>
<dbReference type="EMDB" id="EMD-3461"/>
<dbReference type="EMDB" id="EMD-34725"/>
<dbReference type="EMDB" id="EMD-36839"/>
<dbReference type="EMDB" id="EMD-36945"/>
<dbReference type="EMDB" id="EMD-38660"/>
<dbReference type="EMDB" id="EMD-40990"/>
<dbReference type="EMDB" id="EMD-40991"/>
<dbReference type="EMDB" id="EMD-40992"/>
<dbReference type="EMDB" id="EMD-40993"/>
<dbReference type="EMDB" id="EMD-40997"/>
<dbReference type="EMDB" id="EMD-40998"/>
<dbReference type="EMDB" id="EMD-40999"/>
<dbReference type="EMDB" id="EMD-41000"/>
<dbReference type="EMDB" id="EMD-41001"/>
<dbReference type="EMDB" id="EMD-41002"/>
<dbReference type="EMDB" id="EMD-4140"/>
<dbReference type="EMDB" id="EMD-42525"/>
<dbReference type="EMDB" id="EMD-42540"/>
<dbReference type="EMDB" id="EMD-4302"/>
<dbReference type="EMDB" id="EMD-43027"/>
<dbReference type="EMDB" id="EMD-4427"/>
<dbReference type="EMDB" id="EMD-4474"/>
<dbReference type="EMDB" id="EMD-4560"/>
<dbReference type="EMDB" id="EMD-4630"/>
<dbReference type="EMDB" id="EMD-4636"/>
<dbReference type="EMDB" id="EMD-4751"/>
<dbReference type="EMDB" id="EMD-4752"/>
<dbReference type="EMDB" id="EMD-4753"/>
<dbReference type="EMDB" id="EMD-4884"/>
<dbReference type="EMDB" id="EMD-50259"/>
<dbReference type="EMDB" id="EMD-8362"/>
<dbReference type="EMDB" id="EMD-8368"/>
<dbReference type="SMR" id="P0CX82"/>
<dbReference type="BioGRID" id="32671">
    <property type="interactions" value="404"/>
</dbReference>
<dbReference type="BioGRID" id="32789">
    <property type="interactions" value="256"/>
</dbReference>
<dbReference type="ComplexPortal" id="CPX-1601">
    <property type="entry name" value="60S cytosolic large ribosomal subunit"/>
</dbReference>
<dbReference type="FunCoup" id="P0CX82">
    <property type="interactions" value="1188"/>
</dbReference>
<dbReference type="IntAct" id="P0CX82">
    <property type="interactions" value="56"/>
</dbReference>
<dbReference type="MINT" id="P0CX82"/>
<dbReference type="STRING" id="4932.YBL027W"/>
<dbReference type="BindingDB" id="P0CX82"/>
<dbReference type="ChEMBL" id="CHEMBL1741172"/>
<dbReference type="CarbonylDB" id="P0CX82"/>
<dbReference type="iPTMnet" id="P0CX82"/>
<dbReference type="PaxDb" id="4932-YBL027W"/>
<dbReference type="PeptideAtlas" id="P0CX82"/>
<dbReference type="TopDownProteomics" id="P0CX82"/>
<dbReference type="EnsemblFungi" id="YBL027W_mRNA">
    <property type="protein sequence ID" value="YBL027W"/>
    <property type="gene ID" value="YBL027W"/>
</dbReference>
<dbReference type="EnsemblFungi" id="YBR084C-A_mRNA">
    <property type="protein sequence ID" value="YBR084C-A"/>
    <property type="gene ID" value="YBR084C-A"/>
</dbReference>
<dbReference type="GeneID" id="852379"/>
<dbReference type="KEGG" id="sce:YBL027W"/>
<dbReference type="KEGG" id="sce:YBR084C-A"/>
<dbReference type="AGR" id="SGD:S000002156"/>
<dbReference type="SGD" id="S000002156">
    <property type="gene designation" value="RPL19A"/>
</dbReference>
<dbReference type="VEuPathDB" id="FungiDB:YBL027W"/>
<dbReference type="VEuPathDB" id="FungiDB:YBR084C-A"/>
<dbReference type="eggNOG" id="KOG1696">
    <property type="taxonomic scope" value="Eukaryota"/>
</dbReference>
<dbReference type="HOGENOM" id="CLU_083919_0_0_1"/>
<dbReference type="InParanoid" id="P0CX82"/>
<dbReference type="OMA" id="NRVWIDP"/>
<dbReference type="OrthoDB" id="5407653at2759"/>
<dbReference type="BioCyc" id="YEAST:G3O-29228-MONOMER"/>
<dbReference type="Reactome" id="R-SCE-156827">
    <property type="pathway name" value="L13a-mediated translational silencing of Ceruloplasmin expression"/>
</dbReference>
<dbReference type="Reactome" id="R-SCE-1799339">
    <property type="pathway name" value="SRP-dependent cotranslational protein targeting to membrane"/>
</dbReference>
<dbReference type="Reactome" id="R-SCE-72689">
    <property type="pathway name" value="Formation of a pool of free 40S subunits"/>
</dbReference>
<dbReference type="Reactome" id="R-SCE-72706">
    <property type="pathway name" value="GTP hydrolysis and joining of the 60S ribosomal subunit"/>
</dbReference>
<dbReference type="Reactome" id="R-SCE-975956">
    <property type="pathway name" value="Nonsense Mediated Decay (NMD) independent of the Exon Junction Complex (EJC)"/>
</dbReference>
<dbReference type="Reactome" id="R-SCE-975957">
    <property type="pathway name" value="Nonsense Mediated Decay (NMD) enhanced by the Exon Junction Complex (EJC)"/>
</dbReference>
<dbReference type="BioGRID-ORCS" id="852254">
    <property type="hits" value="5 hits in 10 CRISPR screens"/>
</dbReference>
<dbReference type="BioGRID-ORCS" id="852379">
    <property type="hits" value="9 hits in 10 CRISPR screens"/>
</dbReference>
<dbReference type="EvolutionaryTrace" id="P0CX82"/>
<dbReference type="PRO" id="PR:P0CX82"/>
<dbReference type="Proteomes" id="UP000002311">
    <property type="component" value="Chromosome II"/>
</dbReference>
<dbReference type="RNAct" id="P0CX82">
    <property type="molecule type" value="protein"/>
</dbReference>
<dbReference type="ExpressionAtlas" id="P0CX82">
    <property type="expression patterns" value="baseline and differential"/>
</dbReference>
<dbReference type="GO" id="GO:0005829">
    <property type="term" value="C:cytosol"/>
    <property type="evidence" value="ECO:0000304"/>
    <property type="project" value="Reactome"/>
</dbReference>
<dbReference type="GO" id="GO:0022625">
    <property type="term" value="C:cytosolic large ribosomal subunit"/>
    <property type="evidence" value="ECO:0000314"/>
    <property type="project" value="SGD"/>
</dbReference>
<dbReference type="GO" id="GO:0003723">
    <property type="term" value="F:RNA binding"/>
    <property type="evidence" value="ECO:0000318"/>
    <property type="project" value="GO_Central"/>
</dbReference>
<dbReference type="GO" id="GO:0003735">
    <property type="term" value="F:structural constituent of ribosome"/>
    <property type="evidence" value="ECO:0000318"/>
    <property type="project" value="GO_Central"/>
</dbReference>
<dbReference type="GO" id="GO:0002181">
    <property type="term" value="P:cytoplasmic translation"/>
    <property type="evidence" value="ECO:0000305"/>
    <property type="project" value="SGD"/>
</dbReference>
<dbReference type="CDD" id="cd01417">
    <property type="entry name" value="Ribosomal_L19e_E"/>
    <property type="match status" value="1"/>
</dbReference>
<dbReference type="FunFam" id="1.10.1200.240:FF:000001">
    <property type="entry name" value="Ribosomal protein L19"/>
    <property type="match status" value="1"/>
</dbReference>
<dbReference type="FunFam" id="1.10.1650.10:FF:000001">
    <property type="entry name" value="Ribosomal protein L19"/>
    <property type="match status" value="1"/>
</dbReference>
<dbReference type="Gene3D" id="1.10.1200.240">
    <property type="match status" value="1"/>
</dbReference>
<dbReference type="Gene3D" id="1.10.1650.10">
    <property type="match status" value="1"/>
</dbReference>
<dbReference type="HAMAP" id="MF_01475">
    <property type="entry name" value="Ribosomal_eL19"/>
    <property type="match status" value="1"/>
</dbReference>
<dbReference type="InterPro" id="IPR035970">
    <property type="entry name" value="60S_ribosomal_eL19_sf"/>
</dbReference>
<dbReference type="InterPro" id="IPR039547">
    <property type="entry name" value="Ribosomal_eL19"/>
</dbReference>
<dbReference type="InterPro" id="IPR023638">
    <property type="entry name" value="Ribosomal_eL19_CS"/>
</dbReference>
<dbReference type="InterPro" id="IPR000196">
    <property type="entry name" value="Ribosomal_eL19_dom"/>
</dbReference>
<dbReference type="InterPro" id="IPR015972">
    <property type="entry name" value="Ribosomal_eL19_dom1"/>
</dbReference>
<dbReference type="InterPro" id="IPR033935">
    <property type="entry name" value="Ribosomal_eL19_euk"/>
</dbReference>
<dbReference type="NCBIfam" id="NF006343">
    <property type="entry name" value="PRK08570.1"/>
    <property type="match status" value="1"/>
</dbReference>
<dbReference type="PANTHER" id="PTHR10722">
    <property type="entry name" value="60S RIBOSOMAL PROTEIN L19"/>
    <property type="match status" value="1"/>
</dbReference>
<dbReference type="Pfam" id="PF01280">
    <property type="entry name" value="Ribosomal_L19e"/>
    <property type="match status" value="1"/>
</dbReference>
<dbReference type="Pfam" id="PF25476">
    <property type="entry name" value="Ribosomal_L19e_C"/>
    <property type="match status" value="1"/>
</dbReference>
<dbReference type="SMART" id="SM01416">
    <property type="entry name" value="Ribosomal_L19e"/>
    <property type="match status" value="1"/>
</dbReference>
<dbReference type="SUPFAM" id="SSF48140">
    <property type="entry name" value="Ribosomal protein L19 (L19e)"/>
    <property type="match status" value="1"/>
</dbReference>
<dbReference type="PROSITE" id="PS00526">
    <property type="entry name" value="RIBOSOMAL_L19E"/>
    <property type="match status" value="1"/>
</dbReference>
<evidence type="ECO:0000256" key="1">
    <source>
        <dbReference type="SAM" id="MobiDB-lite"/>
    </source>
</evidence>
<evidence type="ECO:0000269" key="2">
    <source>
    </source>
</evidence>
<evidence type="ECO:0000269" key="3">
    <source>
    </source>
</evidence>
<evidence type="ECO:0000269" key="4">
    <source>
    </source>
</evidence>
<evidence type="ECO:0000269" key="5">
    <source>
    </source>
</evidence>
<evidence type="ECO:0000269" key="6">
    <source>
    </source>
</evidence>
<evidence type="ECO:0000269" key="7">
    <source>
    </source>
</evidence>
<evidence type="ECO:0000303" key="8">
    <source>
    </source>
</evidence>
<evidence type="ECO:0000303" key="9">
    <source>
    </source>
</evidence>
<evidence type="ECO:0000305" key="10"/>
<evidence type="ECO:0000305" key="11">
    <source>
    </source>
</evidence>
<evidence type="ECO:0000305" key="12">
    <source>
    </source>
</evidence>
<evidence type="ECO:0007744" key="13">
    <source>
    </source>
</evidence>
<evidence type="ECO:0007744" key="14">
    <source>
    </source>
</evidence>
<evidence type="ECO:0007829" key="15">
    <source>
        <dbReference type="PDB" id="7NAD"/>
    </source>
</evidence>
<accession>P0CX82</accession>
<accession>D6VPX3</accession>
<accession>P05735</accession>
<proteinExistence type="evidence at protein level"/>
<keyword id="KW-0002">3D-structure</keyword>
<keyword id="KW-0963">Cytoplasm</keyword>
<keyword id="KW-0903">Direct protein sequencing</keyword>
<keyword id="KW-1017">Isopeptide bond</keyword>
<keyword id="KW-0597">Phosphoprotein</keyword>
<keyword id="KW-1185">Reference proteome</keyword>
<keyword id="KW-0687">Ribonucleoprotein</keyword>
<keyword id="KW-0689">Ribosomal protein</keyword>
<keyword id="KW-0832">Ubl conjugation</keyword>
<gene>
    <name evidence="9" type="primary">RPL19A</name>
    <name type="synonym">RPL23A</name>
    <name type="synonym">YL14A</name>
    <name type="ordered locus">YBR084C-A</name>
    <name type="ORF">YBR084BC</name>
</gene>
<comment type="function">
    <text evidence="11">Component of the ribosome, a large ribonucleoprotein complex responsible for the synthesis of proteins in the cell. The small ribosomal subunit (SSU) binds messenger RNAs (mRNAs) and translates the encoded message by selecting cognate aminoacyl-transfer RNA (tRNA) molecules. The large subunit (LSU) contains the ribosomal catalytic site termed the peptidyl transferase center (PTC), which catalyzes the formation of peptide bonds, thereby polymerizing the amino acids delivered by tRNAs into a polypeptide chain. The nascent polypeptides leave the ribosome through a tunnel in the LSU and interact with protein factors that function in enzymatic processing, targeting, and the membrane insertion of nascent chains at the exit of the ribosomal tunnel. eL19 may play a role in the last stages of translation initiation, in particular subunit joining and shedding/releasing factors.</text>
</comment>
<comment type="subunit">
    <text evidence="6 12">Component of the large ribosomal subunit (LSU). Mature yeast ribosomes consist of a small (40S) and a large (60S) subunit. The 40S small subunit contains 1 molecule of ribosomal RNA (18S rRNA) and 33 different proteins (encoded by 57 genes). The large 60S subunit contains 3 rRNA molecules (25S, 5.8S and 5S rRNA) and 46 different proteins (encoded by 81 genes). eL19 lies in close proximity to the binding site for eukaryotic initiation factor eIF4G (PubMed:22096102, PubMed:9559554).</text>
</comment>
<comment type="subcellular location">
    <subcellularLocation>
        <location evidence="3 6">Cytoplasm</location>
    </subcellularLocation>
</comment>
<comment type="mass spectrometry" mass="21573.158" method="Electrospray" evidence="2">
    <text>Average mass.</text>
</comment>
<comment type="miscellaneous">
    <text evidence="4">Present with 97700 molecules/cell in log phase SD medium.</text>
</comment>
<comment type="miscellaneous">
    <text evidence="10">There are 2 genes for eL19 in yeast.</text>
</comment>
<comment type="similarity">
    <text evidence="10">Belongs to the eukaryotic ribosomal protein eL19 family.</text>
</comment>
<reference key="1">
    <citation type="journal article" date="1995" name="Yeast">
        <title>Nucleotide sequence and characterization of the Saccharomyces cerevisiae RPL19A gene encoding a homolog of the mammalian ribosomal protein L19.</title>
        <authorList>
            <person name="Song J.M."/>
            <person name="Cheung E."/>
            <person name="Rabinowitz J.C."/>
        </authorList>
    </citation>
    <scope>NUCLEOTIDE SEQUENCE [GENOMIC DNA]</scope>
    <source>
        <strain>ATCC 204508 / S288c</strain>
    </source>
</reference>
<reference key="2">
    <citation type="submission" date="1993-07" db="EMBL/GenBank/DDBJ databases">
        <authorList>
            <person name="Suzuki K."/>
            <person name="Tomiyoshi A."/>
            <person name="Otaka E."/>
        </authorList>
    </citation>
    <scope>NUCLEOTIDE SEQUENCE [MRNA]</scope>
    <source>
        <strain>ATCC 204508 / S288c</strain>
    </source>
</reference>
<reference key="3">
    <citation type="journal article" date="1994" name="EMBO J.">
        <title>Complete DNA sequence of yeast chromosome II.</title>
        <authorList>
            <person name="Feldmann H."/>
            <person name="Aigle M."/>
            <person name="Aljinovic G."/>
            <person name="Andre B."/>
            <person name="Baclet M.C."/>
            <person name="Barthe C."/>
            <person name="Baur A."/>
            <person name="Becam A.-M."/>
            <person name="Biteau N."/>
            <person name="Boles E."/>
            <person name="Brandt T."/>
            <person name="Brendel M."/>
            <person name="Brueckner M."/>
            <person name="Bussereau F."/>
            <person name="Christiansen C."/>
            <person name="Contreras R."/>
            <person name="Crouzet M."/>
            <person name="Cziepluch C."/>
            <person name="Demolis N."/>
            <person name="Delaveau T."/>
            <person name="Doignon F."/>
            <person name="Domdey H."/>
            <person name="Duesterhus S."/>
            <person name="Dubois E."/>
            <person name="Dujon B."/>
            <person name="El Bakkoury M."/>
            <person name="Entian K.-D."/>
            <person name="Feuermann M."/>
            <person name="Fiers W."/>
            <person name="Fobo G.M."/>
            <person name="Fritz C."/>
            <person name="Gassenhuber J."/>
            <person name="Glansdorff N."/>
            <person name="Goffeau A."/>
            <person name="Grivell L.A."/>
            <person name="de Haan M."/>
            <person name="Hein C."/>
            <person name="Herbert C.J."/>
            <person name="Hollenberg C.P."/>
            <person name="Holmstroem K."/>
            <person name="Jacq C."/>
            <person name="Jacquet M."/>
            <person name="Jauniaux J.-C."/>
            <person name="Jonniaux J.-L."/>
            <person name="Kallesoee T."/>
            <person name="Kiesau P."/>
            <person name="Kirchrath L."/>
            <person name="Koetter P."/>
            <person name="Korol S."/>
            <person name="Liebl S."/>
            <person name="Logghe M."/>
            <person name="Lohan A.J.E."/>
            <person name="Louis E.J."/>
            <person name="Li Z.Y."/>
            <person name="Maat M.J."/>
            <person name="Mallet L."/>
            <person name="Mannhaupt G."/>
            <person name="Messenguy F."/>
            <person name="Miosga T."/>
            <person name="Molemans F."/>
            <person name="Mueller S."/>
            <person name="Nasr F."/>
            <person name="Obermaier B."/>
            <person name="Perea J."/>
            <person name="Pierard A."/>
            <person name="Piravandi E."/>
            <person name="Pohl F.M."/>
            <person name="Pohl T.M."/>
            <person name="Potier S."/>
            <person name="Proft M."/>
            <person name="Purnelle B."/>
            <person name="Ramezani Rad M."/>
            <person name="Rieger M."/>
            <person name="Rose M."/>
            <person name="Schaaff-Gerstenschlaeger I."/>
            <person name="Scherens B."/>
            <person name="Schwarzlose C."/>
            <person name="Skala J."/>
            <person name="Slonimski P.P."/>
            <person name="Smits P.H.M."/>
            <person name="Souciet J.-L."/>
            <person name="Steensma H.Y."/>
            <person name="Stucka R."/>
            <person name="Urrestarazu L.A."/>
            <person name="van der Aart Q.J.M."/>
            <person name="Van Dyck L."/>
            <person name="Vassarotti A."/>
            <person name="Vetter I."/>
            <person name="Vierendeels F."/>
            <person name="Vissers S."/>
            <person name="Wagner G."/>
            <person name="de Wergifosse P."/>
            <person name="Wolfe K.H."/>
            <person name="Zagulski M."/>
            <person name="Zimmermann F.K."/>
            <person name="Mewes H.-W."/>
            <person name="Kleine K."/>
        </authorList>
    </citation>
    <scope>NUCLEOTIDE SEQUENCE [LARGE SCALE GENOMIC DNA]</scope>
    <source>
        <strain>ATCC 204508 / S288c</strain>
    </source>
</reference>
<reference key="4">
    <citation type="journal article" date="2014" name="G3 (Bethesda)">
        <title>The reference genome sequence of Saccharomyces cerevisiae: Then and now.</title>
        <authorList>
            <person name="Engel S.R."/>
            <person name="Dietrich F.S."/>
            <person name="Fisk D.G."/>
            <person name="Binkley G."/>
            <person name="Balakrishnan R."/>
            <person name="Costanzo M.C."/>
            <person name="Dwight S.S."/>
            <person name="Hitz B.C."/>
            <person name="Karra K."/>
            <person name="Nash R.S."/>
            <person name="Weng S."/>
            <person name="Wong E.D."/>
            <person name="Lloyd P."/>
            <person name="Skrzypek M.S."/>
            <person name="Miyasato S.R."/>
            <person name="Simison M."/>
            <person name="Cherry J.M."/>
        </authorList>
    </citation>
    <scope>GENOME REANNOTATION</scope>
    <source>
        <strain>ATCC 204508 / S288c</strain>
    </source>
</reference>
<reference key="5">
    <citation type="journal article" date="1983" name="Mol. Gen. Genet.">
        <title>Yeast ribosomal proteins: VII. Cytoplasmic ribosomal proteins from Schizosaccharomyces pombe.</title>
        <authorList>
            <person name="Otaka E."/>
            <person name="Higo K."/>
            <person name="Itoh T."/>
        </authorList>
    </citation>
    <scope>PROTEIN SEQUENCE OF 2-31</scope>
</reference>
<reference key="6">
    <citation type="journal article" date="1992" name="J. Biol. Chem.">
        <title>NH2-terminal acetylation of ribosomal proteins of Saccharomyces cerevisiae.</title>
        <authorList>
            <person name="Takakura H."/>
            <person name="Tsunasawa S."/>
            <person name="Miyagi M."/>
            <person name="Warner J.R."/>
        </authorList>
    </citation>
    <scope>PROTEIN SEQUENCE OF 2-21</scope>
</reference>
<reference key="7">
    <citation type="journal article" date="1988" name="J. Biol. Chem.">
        <title>Isolation and characterization of the Saccharomyces cerevisiae MIS1 gene encoding mitochondrial C1-tetrahydrofolate synthase.</title>
        <authorList>
            <person name="Shannon K.W."/>
            <person name="Rabinowitz J.C."/>
        </authorList>
    </citation>
    <scope>NUCLEOTIDE SEQUENCE [GENOMIC DNA] OF 43-189</scope>
</reference>
<reference key="8">
    <citation type="journal article" date="1993" name="Nat. Genet.">
        <title>Identification of protein coding regions by database similarity search.</title>
        <authorList>
            <person name="Gish W."/>
            <person name="States D.J."/>
        </authorList>
    </citation>
    <scope>IDENTIFICATION</scope>
</reference>
<reference key="9">
    <citation type="journal article" date="1998" name="Yeast">
        <title>The list of cytoplasmic ribosomal proteins of Saccharomyces cerevisiae.</title>
        <authorList>
            <person name="Planta R.J."/>
            <person name="Mager W.H."/>
        </authorList>
    </citation>
    <scope>NOMENCLATURE</scope>
    <scope>SUBUNIT</scope>
</reference>
<reference key="10">
    <citation type="journal article" date="2002" name="Proc. Natl. Acad. Sci. U.S.A.">
        <title>Direct mass spectrometric analysis of intact proteins of the yeast large ribosomal subunit using capillary LC/FTICR.</title>
        <authorList>
            <person name="Lee S.-W."/>
            <person name="Berger S.J."/>
            <person name="Martinovic S."/>
            <person name="Pasa-Tolic L."/>
            <person name="Anderson G.A."/>
            <person name="Shen Y."/>
            <person name="Zhao R."/>
            <person name="Smith R.D."/>
        </authorList>
    </citation>
    <scope>MASS SPECTROMETRY</scope>
</reference>
<reference key="11">
    <citation type="journal article" date="2003" name="Nature">
        <title>Global analysis of protein localization in budding yeast.</title>
        <authorList>
            <person name="Huh W.-K."/>
            <person name="Falvo J.V."/>
            <person name="Gerke L.C."/>
            <person name="Carroll A.S."/>
            <person name="Howson R.W."/>
            <person name="Weissman J.S."/>
            <person name="O'Shea E.K."/>
        </authorList>
    </citation>
    <scope>SUBCELLULAR LOCATION [LARGE SCALE ANALYSIS]</scope>
</reference>
<reference key="12">
    <citation type="journal article" date="2003" name="Nature">
        <title>Global analysis of protein expression in yeast.</title>
        <authorList>
            <person name="Ghaemmaghami S."/>
            <person name="Huh W.-K."/>
            <person name="Bower K."/>
            <person name="Howson R.W."/>
            <person name="Belle A."/>
            <person name="Dephoure N."/>
            <person name="O'Shea E.K."/>
            <person name="Weissman J.S."/>
        </authorList>
    </citation>
    <scope>LEVEL OF PROTEIN EXPRESSION [LARGE SCALE ANALYSIS]</scope>
</reference>
<reference key="13">
    <citation type="journal article" date="2007" name="J. Proteome Res.">
        <title>Large-scale phosphorylation analysis of alpha-factor-arrested Saccharomyces cerevisiae.</title>
        <authorList>
            <person name="Li X."/>
            <person name="Gerber S.A."/>
            <person name="Rudner A.D."/>
            <person name="Beausoleil S.A."/>
            <person name="Haas W."/>
            <person name="Villen J."/>
            <person name="Elias J.E."/>
            <person name="Gygi S.P."/>
        </authorList>
    </citation>
    <scope>IDENTIFICATION BY MASS SPECTROMETRY [LARGE SCALE ANALYSIS]</scope>
    <source>
        <strain>ADR376</strain>
    </source>
</reference>
<reference key="14">
    <citation type="journal article" date="2008" name="Mol. Cell. Proteomics">
        <title>A multidimensional chromatography technology for in-depth phosphoproteome analysis.</title>
        <authorList>
            <person name="Albuquerque C.P."/>
            <person name="Smolka M.B."/>
            <person name="Payne S.H."/>
            <person name="Bafna V."/>
            <person name="Eng J."/>
            <person name="Zhou H."/>
        </authorList>
    </citation>
    <scope>IDENTIFICATION BY MASS SPECTROMETRY [LARGE SCALE ANALYSIS]</scope>
</reference>
<reference key="15">
    <citation type="journal article" date="2009" name="Science">
        <title>Global analysis of Cdk1 substrate phosphorylation sites provides insights into evolution.</title>
        <authorList>
            <person name="Holt L.J."/>
            <person name="Tuch B.B."/>
            <person name="Villen J."/>
            <person name="Johnson A.D."/>
            <person name="Gygi S.P."/>
            <person name="Morgan D.O."/>
        </authorList>
    </citation>
    <scope>PHOSPHORYLATION [LARGE SCALE ANALYSIS] AT SER-30; SER-37 AND SER-91</scope>
    <scope>IDENTIFICATION BY MASS SPECTROMETRY [LARGE SCALE ANALYSIS]</scope>
</reference>
<reference key="16">
    <citation type="journal article" date="2012" name="Proteomics">
        <title>Sites of ubiquitin attachment in Saccharomyces cerevisiae.</title>
        <authorList>
            <person name="Starita L.M."/>
            <person name="Lo R.S."/>
            <person name="Eng J.K."/>
            <person name="von Haller P.D."/>
            <person name="Fields S."/>
        </authorList>
    </citation>
    <scope>UBIQUITINATION [LARGE SCALE ANALYSIS] AT LYS-21; LYS-53; LYS-60; LYS-146 AND LYS-186</scope>
    <scope>IDENTIFICATION BY MASS SPECTROMETRY [LARGE SCALE ANALYSIS]</scope>
</reference>
<reference key="17">
    <citation type="journal article" date="2014" name="Curr. Opin. Struct. Biol.">
        <title>A new system for naming ribosomal proteins.</title>
        <authorList>
            <person name="Ban N."/>
            <person name="Beckmann R."/>
            <person name="Cate J.H.D."/>
            <person name="Dinman J.D."/>
            <person name="Dragon F."/>
            <person name="Ellis S.R."/>
            <person name="Lafontaine D.L.J."/>
            <person name="Lindahl L."/>
            <person name="Liljas A."/>
            <person name="Lipton J.M."/>
            <person name="McAlear M.A."/>
            <person name="Moore P.B."/>
            <person name="Noller H.F."/>
            <person name="Ortega J."/>
            <person name="Panse V.G."/>
            <person name="Ramakrishnan V."/>
            <person name="Spahn C.M.T."/>
            <person name="Steitz T.A."/>
            <person name="Tchorzewski M."/>
            <person name="Tollervey D."/>
            <person name="Warren A.J."/>
            <person name="Williamson J.R."/>
            <person name="Wilson D."/>
            <person name="Yonath A."/>
            <person name="Yusupov M."/>
        </authorList>
    </citation>
    <scope>NOMENCLATURE</scope>
</reference>
<reference key="18">
    <citation type="journal article" date="2001" name="Cell">
        <title>Structure of the 80S ribosome from Saccharomyces cerevisiae -- tRNA-ribosome and subunit-subunit interactions.</title>
        <authorList>
            <person name="Spahn C.M.T."/>
            <person name="Beckmann R."/>
            <person name="Eswar N."/>
            <person name="Penczek P.A."/>
            <person name="Sali A."/>
            <person name="Blobel G."/>
            <person name="Frank J."/>
        </authorList>
    </citation>
    <scope>3D-STRUCTURE MODELING OF 3-143</scope>
    <scope>ELECTRON MICROSCOPY</scope>
</reference>
<reference key="19">
    <citation type="journal article" date="2004" name="EMBO J.">
        <title>Domain movements of elongation factor eEF2 and the eukaryotic 80S ribosome facilitate tRNA translocation.</title>
        <authorList>
            <person name="Spahn C.M.T."/>
            <person name="Gomez-Lorenzo M.G."/>
            <person name="Grassucci R.A."/>
            <person name="Joergensen R."/>
            <person name="Andersen G.R."/>
            <person name="Beckmann R."/>
            <person name="Penczek P.A."/>
            <person name="Ballesta J.P.G."/>
            <person name="Frank J."/>
        </authorList>
    </citation>
    <scope>3D-STRUCTURE MODELING</scope>
    <scope>ELECTRON MICROSCOPY</scope>
</reference>
<reference key="20">
    <citation type="journal article" date="2010" name="Science">
        <title>Crystal structure of the eukaryotic ribosome.</title>
        <authorList>
            <person name="Ben-Shem A."/>
            <person name="Jenner L."/>
            <person name="Yusupova G."/>
            <person name="Yusupov M."/>
        </authorList>
    </citation>
    <scope>X-RAY CRYSTALLOGRAPHY (4.0 ANGSTROMS) OF 80S RIBOSOME</scope>
</reference>
<reference key="21">
    <citation type="journal article" date="2011" name="Science">
        <title>The structure of the eukaryotic ribosome at 3.0 A resolution.</title>
        <authorList>
            <person name="Ben-Shem A."/>
            <person name="Garreau de Loubresse N."/>
            <person name="Melnikov S."/>
            <person name="Jenner L."/>
            <person name="Yusupova G."/>
            <person name="Yusupov M."/>
        </authorList>
    </citation>
    <scope>X-RAY CRYSTALLOGRAPHY (3.0 ANGSTROMS) OF 80S RIBOSOME</scope>
    <scope>SUBUNIT</scope>
    <scope>SUBCELLULAR LOCATION</scope>
</reference>
<sequence length="189" mass="21704">MANLRTQKRLAASVVGVGKRKVWLDPNETSEIAQANSRNAIRKLVKNGTIVKKAVTVHSKSRTRAHAQSKREGRHSGYGKRKGTREARLPSQVVWIRRLRVLRRLLAKYRDAGKIDKHLYHVLYKESKGNAFKHKRALVEHIIQAKADAQREKALNEEAEARRLKNRAARDRRAQRVAEKRDALLKEDA</sequence>
<protein>
    <recommendedName>
        <fullName evidence="8">Large ribosomal subunit protein eL19A</fullName>
    </recommendedName>
    <alternativeName>
        <fullName evidence="9">60S ribosomal protein L19-A</fullName>
    </alternativeName>
    <alternativeName>
        <fullName>L23</fullName>
    </alternativeName>
    <alternativeName>
        <fullName>RP15L</fullName>
    </alternativeName>
    <alternativeName>
        <fullName>RP33</fullName>
    </alternativeName>
    <alternativeName>
        <fullName>YL14</fullName>
    </alternativeName>
</protein>